<evidence type="ECO:0000255" key="1"/>
<evidence type="ECO:0000269" key="2">
    <source>
    </source>
</evidence>
<evidence type="ECO:0000303" key="3">
    <source>
    </source>
</evidence>
<evidence type="ECO:0000305" key="4"/>
<evidence type="ECO:0000305" key="5">
    <source>
    </source>
</evidence>
<feature type="chain" id="PRO_0000451530" description="Terpene cyclase dpmaB">
    <location>
        <begin position="1"/>
        <end position="243"/>
    </location>
</feature>
<feature type="transmembrane region" description="Helical" evidence="1">
    <location>
        <begin position="11"/>
        <end position="31"/>
    </location>
</feature>
<feature type="transmembrane region" description="Helical" evidence="1">
    <location>
        <begin position="51"/>
        <end position="71"/>
    </location>
</feature>
<feature type="transmembrane region" description="Helical" evidence="1">
    <location>
        <begin position="112"/>
        <end position="132"/>
    </location>
</feature>
<feature type="transmembrane region" description="Helical" evidence="1">
    <location>
        <begin position="141"/>
        <end position="161"/>
    </location>
</feature>
<feature type="transmembrane region" description="Helical" evidence="1">
    <location>
        <begin position="169"/>
        <end position="189"/>
    </location>
</feature>
<feature type="transmembrane region" description="Helical" evidence="1">
    <location>
        <begin position="207"/>
        <end position="227"/>
    </location>
</feature>
<gene>
    <name evidence="3" type="primary">dpmaB</name>
    <name type="ORF">MANI_006367</name>
</gene>
<sequence>MNAADISRAPPGYLEVAWIADTCKLLMGLGWTTNYAGMIYKSLKDRTYGMALMPLCCNFAWELTYAVIYPFGSRQDKFTHYFGLMLNCGVMYTAVKNAEREWTHAPLVRRNLPFIFIICIAAWTTAHLALALQIGPSHAQAFSAYGCQLLLSVGALCQLLSRGSSRGASYFLWFCRFFGSLVLIPQDVLRYRYWRQDHEYMGSPLYIWFVSIFLLLDGSYALCLWYVRRFESEQEEAKKAKSI</sequence>
<comment type="function">
    <text evidence="2 5">Terpene cyclase; part of the gene cluster that mediates the biosynthesis of the diterpenoid pyrones subglutinols A and B (PubMed:32286350). The first step of the pathway is the synthesis of the alpha-pyrone moiety by the polyketide synthase dpmaA via condensation of one acetyl-CoA starter unit with 3 malonyl-CoA units and 2 methylations (Probable). The alpha-pyrone is then combined with geranylgeranyl pyrophosphate (GGPP) formed by the GGPP synthase dpmaD through the action of the prenyltransferase dpmaC to yield a linear alpha-pyrone diterpenoid (Probable). Subsequent steps in the diterpenoid pyrone biosynthetic pathway involve the decalin core formation, which is initiated by the epoxidation of the C10-C11 olefin by the FAD-dependent oxidoreductase dpmaE, and is followed by a cyclization cascade catalyzed by the terpene cyclase dpmaB (Probable). The dehydrogenase dpmaF is then involved in tetrahydrofuran (THF) ring formation at the C5 unit to complete the formation of subglutinols A and B (PubMed:32286350).</text>
</comment>
<comment type="pathway">
    <text evidence="2">Secondary metabolite biosynthesis; terpenoid biosynthesis.</text>
</comment>
<comment type="subcellular location">
    <subcellularLocation>
        <location evidence="1">Membrane</location>
        <topology evidence="1">Multi-pass membrane protein</topology>
    </subcellularLocation>
</comment>
<comment type="biotechnology">
    <text evidence="2">Diterpenoid pyrones display various biological activities and subglutinol A shows insecticidal and anti-HIV activities.</text>
</comment>
<comment type="similarity">
    <text evidence="4">Belongs to the paxB family.</text>
</comment>
<protein>
    <recommendedName>
        <fullName evidence="3">Terpene cyclase dpmaB</fullName>
        <ecNumber evidence="5">4.2.3.-</ecNumber>
    </recommendedName>
    <alternativeName>
        <fullName evidence="3">Diterpenoid pyrone biosynthesis cluster protein B</fullName>
    </alternativeName>
</protein>
<accession>P9WEX7</accession>
<organism>
    <name type="scientific">Metarhizium anisopliae</name>
    <name type="common">Entomophthora anisopliae</name>
    <dbReference type="NCBI Taxonomy" id="5530"/>
    <lineage>
        <taxon>Eukaryota</taxon>
        <taxon>Fungi</taxon>
        <taxon>Dikarya</taxon>
        <taxon>Ascomycota</taxon>
        <taxon>Pezizomycotina</taxon>
        <taxon>Sordariomycetes</taxon>
        <taxon>Hypocreomycetidae</taxon>
        <taxon>Hypocreales</taxon>
        <taxon>Clavicipitaceae</taxon>
        <taxon>Metarhizium</taxon>
    </lineage>
</organism>
<proteinExistence type="evidence at protein level"/>
<reference key="1">
    <citation type="journal article" date="2014" name="BMC Genomics">
        <title>Comparative genome analysis of entomopathogenic fungi reveals a complex set of secreted proteins.</title>
        <authorList>
            <person name="Staats C.C."/>
            <person name="Junges A."/>
            <person name="Guedes R.L."/>
            <person name="Thompson C.E."/>
            <person name="de Morais G.L."/>
            <person name="Boldo J.T."/>
            <person name="de Almeida L.G."/>
            <person name="Andreis F.C."/>
            <person name="Gerber A.L."/>
            <person name="Sbaraini N."/>
            <person name="da Paixao R.L."/>
            <person name="Broetto L."/>
            <person name="Landell M."/>
            <person name="Santi L."/>
            <person name="Beys-da-Silva W.O."/>
            <person name="Silveira C.P."/>
            <person name="Serrano T.R."/>
            <person name="de Oliveira E.S."/>
            <person name="Kmetzsch L."/>
            <person name="Vainstein M.H."/>
            <person name="de Vasconcelos A.T."/>
            <person name="Schrank A."/>
        </authorList>
    </citation>
    <scope>NUCLEOTIDE SEQUENCE [LARGE SCALE GENOMIC DNA]</scope>
</reference>
<reference key="2">
    <citation type="journal article" date="2020" name="Nat. Commun.">
        <title>Synthetic biology based construction of biological activity-related library of fungal decalin-containing diterpenoid pyrones.</title>
        <authorList>
            <person name="Tsukada K."/>
            <person name="Shinki S."/>
            <person name="Kaneko A."/>
            <person name="Murakami K."/>
            <person name="Irie K."/>
            <person name="Murai M."/>
            <person name="Miyoshi H."/>
            <person name="Dan S."/>
            <person name="Kawaji K."/>
            <person name="Hayashi H."/>
            <person name="Kodama E.N."/>
            <person name="Hori A."/>
            <person name="Salim E."/>
            <person name="Kuraishi T."/>
            <person name="Hirata N."/>
            <person name="Kanda Y."/>
            <person name="Asai T."/>
        </authorList>
    </citation>
    <scope>FUNCTION</scope>
    <scope>PATHWAY</scope>
    <scope>BIOTECHNOLOGY</scope>
</reference>
<keyword id="KW-0456">Lyase</keyword>
<keyword id="KW-0472">Membrane</keyword>
<keyword id="KW-0812">Transmembrane</keyword>
<keyword id="KW-1133">Transmembrane helix</keyword>
<name>DPMAB_METAN</name>
<dbReference type="EC" id="4.2.3.-" evidence="5"/>
<dbReference type="EMBL" id="JNNZ01000128">
    <property type="protein sequence ID" value="KFG81920.1"/>
    <property type="molecule type" value="Genomic_DNA"/>
</dbReference>
<dbReference type="VEuPathDB" id="FungiDB:MAN_09811"/>
<dbReference type="OrthoDB" id="2646at5529"/>
<dbReference type="UniPathway" id="UPA00213"/>
<dbReference type="GO" id="GO:0016020">
    <property type="term" value="C:membrane"/>
    <property type="evidence" value="ECO:0007669"/>
    <property type="project" value="UniProtKB-SubCell"/>
</dbReference>
<dbReference type="GO" id="GO:0016829">
    <property type="term" value="F:lyase activity"/>
    <property type="evidence" value="ECO:0007669"/>
    <property type="project" value="UniProtKB-KW"/>
</dbReference>
<dbReference type="GO" id="GO:0016114">
    <property type="term" value="P:terpenoid biosynthetic process"/>
    <property type="evidence" value="ECO:0007669"/>
    <property type="project" value="UniProtKB-UniPathway"/>
</dbReference>
<dbReference type="InterPro" id="IPR039020">
    <property type="entry name" value="PaxB-like"/>
</dbReference>
<dbReference type="PANTHER" id="PTHR42038">
    <property type="match status" value="1"/>
</dbReference>
<dbReference type="PANTHER" id="PTHR42038:SF2">
    <property type="entry name" value="TERPENE CYCLASE AUSL"/>
    <property type="match status" value="1"/>
</dbReference>
<dbReference type="Pfam" id="PF25129">
    <property type="entry name" value="Pyr4-TMTC"/>
    <property type="match status" value="1"/>
</dbReference>